<keyword id="KW-0903">Direct protein sequencing</keyword>
<keyword id="KW-1015">Disulfide bond</keyword>
<keyword id="KW-0528">Neurotoxin</keyword>
<keyword id="KW-0964">Secreted</keyword>
<keyword id="KW-0800">Toxin</keyword>
<proteinExistence type="evidence at protein level"/>
<dbReference type="GO" id="GO:0005576">
    <property type="term" value="C:extracellular region"/>
    <property type="evidence" value="ECO:0007669"/>
    <property type="project" value="UniProtKB-SubCell"/>
</dbReference>
<dbReference type="GO" id="GO:0090729">
    <property type="term" value="F:toxin activity"/>
    <property type="evidence" value="ECO:0007669"/>
    <property type="project" value="UniProtKB-KW"/>
</dbReference>
<protein>
    <recommendedName>
        <fullName evidence="2">Scolopendra 20385.85 Da toxin</fullName>
    </recommendedName>
    <alternativeName>
        <fullName evidence="3">Cysteine-rich venom protein</fullName>
        <shortName evidence="3">CRVP</shortName>
    </alternativeName>
</protein>
<accession>P0C8D6</accession>
<reference key="1">
    <citation type="journal article" date="2007" name="Toxicon">
        <title>Venomic analyses of Scolopendra viridicornis nigra and Scolopendra angulata (Centipede, Scolopendromorpha): shedding light on venoms from a neglected group.</title>
        <authorList>
            <person name="Rates B."/>
            <person name="Bemquerer M.P."/>
            <person name="Richardson M."/>
            <person name="Borges M.H."/>
            <person name="Morales R.A.V."/>
            <person name="De Lima M.E."/>
            <person name="Pimenta A.M.C."/>
        </authorList>
    </citation>
    <scope>PROTEIN SEQUENCE</scope>
    <scope>MASS SPECTROMETRY</scope>
    <scope>SUBCELLULAR LOCATION</scope>
    <source>
        <tissue>Venom</tissue>
    </source>
</reference>
<evidence type="ECO:0000269" key="1">
    <source>
    </source>
</evidence>
<evidence type="ECO:0000303" key="2">
    <source>
    </source>
</evidence>
<evidence type="ECO:0000305" key="3"/>
<evidence type="ECO:0000305" key="4">
    <source>
    </source>
</evidence>
<comment type="subcellular location">
    <subcellularLocation>
        <location evidence="1">Secreted</location>
    </subcellularLocation>
</comment>
<comment type="tissue specificity">
    <text evidence="4">Expressed by the venom gland.</text>
</comment>
<comment type="PTM">
    <text evidence="3">Contains 3 disulfide bonds.</text>
</comment>
<comment type="mass spectrometry"/>
<comment type="miscellaneous">
    <text evidence="4">Shows similarity with the venom allergen 5 from wasps. This similarity may explain why patients with allergies to centipede venom also display allergic reaction to wasp, honey bee and/or yellow jacket venom.</text>
</comment>
<comment type="similarity">
    <text evidence="3">Belongs to the CRISP family. Venom allergen 5-like subfamily.</text>
</comment>
<feature type="chain" id="PRO_0000352872" description="Scolopendra 20385.85 Da toxin">
    <location>
        <begin position="1"/>
        <end position="13" status="greater than"/>
    </location>
</feature>
<feature type="unsure residue" evidence="3">
    <location>
        <position position="1"/>
    </location>
</feature>
<feature type="non-terminal residue">
    <location>
        <position position="13"/>
    </location>
</feature>
<name>VA5A_SCOVN</name>
<organism>
    <name type="scientific">Scolopendra viridicornis nigra</name>
    <name type="common">Brazilian giant centipede</name>
    <dbReference type="NCBI Taxonomy" id="486497"/>
    <lineage>
        <taxon>Eukaryota</taxon>
        <taxon>Metazoa</taxon>
        <taxon>Ecdysozoa</taxon>
        <taxon>Arthropoda</taxon>
        <taxon>Myriapoda</taxon>
        <taxon>Chilopoda</taxon>
        <taxon>Pleurostigmophora</taxon>
        <taxon>Scolopendromorpha</taxon>
        <taxon>Scolopendridae</taxon>
        <taxon>Scolopendra</taxon>
    </lineage>
</organism>
<sequence>CQVVERGLDAXAX</sequence>